<comment type="function">
    <text evidence="1">An essential GTPase which binds GTP, GDP and possibly (p)ppGpp with moderate affinity, with high nucleotide exchange rates and a fairly low GTP hydrolysis rate. Plays a role in control of the cell cycle, stress response, ribosome biogenesis and in those bacteria that undergo differentiation, in morphogenesis control.</text>
</comment>
<comment type="cofactor">
    <cofactor evidence="1">
        <name>Mg(2+)</name>
        <dbReference type="ChEBI" id="CHEBI:18420"/>
    </cofactor>
</comment>
<comment type="subunit">
    <text evidence="1">Monomer.</text>
</comment>
<comment type="subcellular location">
    <subcellularLocation>
        <location evidence="1">Cytoplasm</location>
    </subcellularLocation>
</comment>
<comment type="similarity">
    <text evidence="1">Belongs to the TRAFAC class OBG-HflX-like GTPase superfamily. OBG GTPase family.</text>
</comment>
<feature type="chain" id="PRO_0000386049" description="GTPase Obg">
    <location>
        <begin position="1"/>
        <end position="482"/>
    </location>
</feature>
<feature type="domain" description="Obg" evidence="3">
    <location>
        <begin position="2"/>
        <end position="159"/>
    </location>
</feature>
<feature type="domain" description="OBG-type G" evidence="1">
    <location>
        <begin position="160"/>
        <end position="340"/>
    </location>
</feature>
<feature type="domain" description="OCT" evidence="2">
    <location>
        <begin position="358"/>
        <end position="438"/>
    </location>
</feature>
<feature type="region of interest" description="Disordered" evidence="4">
    <location>
        <begin position="441"/>
        <end position="482"/>
    </location>
</feature>
<feature type="compositionally biased region" description="Basic and acidic residues" evidence="4">
    <location>
        <begin position="453"/>
        <end position="469"/>
    </location>
</feature>
<feature type="binding site" evidence="1">
    <location>
        <begin position="166"/>
        <end position="173"/>
    </location>
    <ligand>
        <name>GTP</name>
        <dbReference type="ChEBI" id="CHEBI:37565"/>
    </ligand>
</feature>
<feature type="binding site" evidence="1">
    <location>
        <position position="173"/>
    </location>
    <ligand>
        <name>Mg(2+)</name>
        <dbReference type="ChEBI" id="CHEBI:18420"/>
    </ligand>
</feature>
<feature type="binding site" evidence="1">
    <location>
        <begin position="191"/>
        <end position="195"/>
    </location>
    <ligand>
        <name>GTP</name>
        <dbReference type="ChEBI" id="CHEBI:37565"/>
    </ligand>
</feature>
<feature type="binding site" evidence="1">
    <location>
        <position position="193"/>
    </location>
    <ligand>
        <name>Mg(2+)</name>
        <dbReference type="ChEBI" id="CHEBI:18420"/>
    </ligand>
</feature>
<feature type="binding site" evidence="1">
    <location>
        <begin position="212"/>
        <end position="215"/>
    </location>
    <ligand>
        <name>GTP</name>
        <dbReference type="ChEBI" id="CHEBI:37565"/>
    </ligand>
</feature>
<feature type="binding site" evidence="1">
    <location>
        <begin position="292"/>
        <end position="295"/>
    </location>
    <ligand>
        <name>GTP</name>
        <dbReference type="ChEBI" id="CHEBI:37565"/>
    </ligand>
</feature>
<feature type="binding site" evidence="1">
    <location>
        <begin position="321"/>
        <end position="323"/>
    </location>
    <ligand>
        <name>GTP</name>
        <dbReference type="ChEBI" id="CHEBI:37565"/>
    </ligand>
</feature>
<reference key="1">
    <citation type="journal article" date="2009" name="PLoS ONE">
        <title>Non mycobacterial virulence genes in the genome of the emerging pathogen Mycobacterium abscessus.</title>
        <authorList>
            <person name="Ripoll F."/>
            <person name="Pasek S."/>
            <person name="Schenowitz C."/>
            <person name="Dossat C."/>
            <person name="Barbe V."/>
            <person name="Rottman M."/>
            <person name="Macheras E."/>
            <person name="Heym B."/>
            <person name="Herrmann J.L."/>
            <person name="Daffe M."/>
            <person name="Brosch R."/>
            <person name="Risler J.L."/>
            <person name="Gaillard J.L."/>
        </authorList>
    </citation>
    <scope>NUCLEOTIDE SEQUENCE [LARGE SCALE GENOMIC DNA]</scope>
    <source>
        <strain>ATCC 19977 / DSM 44196 / CCUG 20993 / CIP 104536 / JCM 13569 / NCTC 13031 / TMC 1543 / L948</strain>
    </source>
</reference>
<evidence type="ECO:0000255" key="1">
    <source>
        <dbReference type="HAMAP-Rule" id="MF_01454"/>
    </source>
</evidence>
<evidence type="ECO:0000255" key="2">
    <source>
        <dbReference type="PROSITE-ProRule" id="PRU01229"/>
    </source>
</evidence>
<evidence type="ECO:0000255" key="3">
    <source>
        <dbReference type="PROSITE-ProRule" id="PRU01231"/>
    </source>
</evidence>
<evidence type="ECO:0000256" key="4">
    <source>
        <dbReference type="SAM" id="MobiDB-lite"/>
    </source>
</evidence>
<organism>
    <name type="scientific">Mycobacteroides abscessus (strain ATCC 19977 / DSM 44196 / CCUG 20993 / CIP 104536 / JCM 13569 / NCTC 13031 / TMC 1543 / L948)</name>
    <name type="common">Mycobacterium abscessus</name>
    <dbReference type="NCBI Taxonomy" id="561007"/>
    <lineage>
        <taxon>Bacteria</taxon>
        <taxon>Bacillati</taxon>
        <taxon>Actinomycetota</taxon>
        <taxon>Actinomycetes</taxon>
        <taxon>Mycobacteriales</taxon>
        <taxon>Mycobacteriaceae</taxon>
        <taxon>Mycobacteroides</taxon>
        <taxon>Mycobacteroides abscessus</taxon>
    </lineage>
</organism>
<dbReference type="EC" id="3.6.5.-" evidence="1"/>
<dbReference type="EMBL" id="CU458896">
    <property type="protein sequence ID" value="CAM61697.1"/>
    <property type="molecule type" value="Genomic_DNA"/>
</dbReference>
<dbReference type="SMR" id="B1MMY5"/>
<dbReference type="GeneID" id="93378564"/>
<dbReference type="KEGG" id="mab:MAB_1612"/>
<dbReference type="Proteomes" id="UP000007137">
    <property type="component" value="Chromosome"/>
</dbReference>
<dbReference type="GO" id="GO:0005737">
    <property type="term" value="C:cytoplasm"/>
    <property type="evidence" value="ECO:0007669"/>
    <property type="project" value="UniProtKB-SubCell"/>
</dbReference>
<dbReference type="GO" id="GO:0005525">
    <property type="term" value="F:GTP binding"/>
    <property type="evidence" value="ECO:0007669"/>
    <property type="project" value="UniProtKB-UniRule"/>
</dbReference>
<dbReference type="GO" id="GO:0003924">
    <property type="term" value="F:GTPase activity"/>
    <property type="evidence" value="ECO:0007669"/>
    <property type="project" value="UniProtKB-UniRule"/>
</dbReference>
<dbReference type="GO" id="GO:0000287">
    <property type="term" value="F:magnesium ion binding"/>
    <property type="evidence" value="ECO:0007669"/>
    <property type="project" value="InterPro"/>
</dbReference>
<dbReference type="GO" id="GO:0042254">
    <property type="term" value="P:ribosome biogenesis"/>
    <property type="evidence" value="ECO:0007669"/>
    <property type="project" value="UniProtKB-UniRule"/>
</dbReference>
<dbReference type="CDD" id="cd01898">
    <property type="entry name" value="Obg"/>
    <property type="match status" value="1"/>
</dbReference>
<dbReference type="FunFam" id="2.70.210.12:FF:000001">
    <property type="entry name" value="GTPase Obg"/>
    <property type="match status" value="1"/>
</dbReference>
<dbReference type="Gene3D" id="3.30.300.350">
    <property type="entry name" value="GTP-binding protein OBG, C-terminal domain"/>
    <property type="match status" value="1"/>
</dbReference>
<dbReference type="Gene3D" id="2.70.210.12">
    <property type="entry name" value="GTP1/OBG domain"/>
    <property type="match status" value="1"/>
</dbReference>
<dbReference type="Gene3D" id="3.40.50.300">
    <property type="entry name" value="P-loop containing nucleotide triphosphate hydrolases"/>
    <property type="match status" value="1"/>
</dbReference>
<dbReference type="HAMAP" id="MF_01454">
    <property type="entry name" value="GTPase_Obg"/>
    <property type="match status" value="1"/>
</dbReference>
<dbReference type="InterPro" id="IPR031167">
    <property type="entry name" value="G_OBG"/>
</dbReference>
<dbReference type="InterPro" id="IPR006073">
    <property type="entry name" value="GTP-bd"/>
</dbReference>
<dbReference type="InterPro" id="IPR014100">
    <property type="entry name" value="GTP-bd_Obg/CgtA"/>
</dbReference>
<dbReference type="InterPro" id="IPR036346">
    <property type="entry name" value="GTP-bd_prot_GTP1/OBG_C_sf"/>
</dbReference>
<dbReference type="InterPro" id="IPR006074">
    <property type="entry name" value="GTP1-OBG_CS"/>
</dbReference>
<dbReference type="InterPro" id="IPR006169">
    <property type="entry name" value="GTP1_OBG_dom"/>
</dbReference>
<dbReference type="InterPro" id="IPR036726">
    <property type="entry name" value="GTP1_OBG_dom_sf"/>
</dbReference>
<dbReference type="InterPro" id="IPR045086">
    <property type="entry name" value="OBG_GTPase"/>
</dbReference>
<dbReference type="InterPro" id="IPR015349">
    <property type="entry name" value="OCT_dom"/>
</dbReference>
<dbReference type="InterPro" id="IPR027417">
    <property type="entry name" value="P-loop_NTPase"/>
</dbReference>
<dbReference type="NCBIfam" id="TIGR02729">
    <property type="entry name" value="Obg_CgtA"/>
    <property type="match status" value="1"/>
</dbReference>
<dbReference type="NCBIfam" id="TIGR03595">
    <property type="entry name" value="Obg_CgtA_exten"/>
    <property type="match status" value="1"/>
</dbReference>
<dbReference type="NCBIfam" id="NF008954">
    <property type="entry name" value="PRK12296.1"/>
    <property type="match status" value="1"/>
</dbReference>
<dbReference type="NCBIfam" id="NF008955">
    <property type="entry name" value="PRK12297.1"/>
    <property type="match status" value="1"/>
</dbReference>
<dbReference type="NCBIfam" id="NF008956">
    <property type="entry name" value="PRK12299.1"/>
    <property type="match status" value="1"/>
</dbReference>
<dbReference type="PANTHER" id="PTHR11702">
    <property type="entry name" value="DEVELOPMENTALLY REGULATED GTP-BINDING PROTEIN-RELATED"/>
    <property type="match status" value="1"/>
</dbReference>
<dbReference type="PANTHER" id="PTHR11702:SF31">
    <property type="entry name" value="MITOCHONDRIAL RIBOSOME-ASSOCIATED GTPASE 2"/>
    <property type="match status" value="1"/>
</dbReference>
<dbReference type="Pfam" id="PF09269">
    <property type="entry name" value="DUF1967"/>
    <property type="match status" value="1"/>
</dbReference>
<dbReference type="Pfam" id="PF01018">
    <property type="entry name" value="GTP1_OBG"/>
    <property type="match status" value="1"/>
</dbReference>
<dbReference type="Pfam" id="PF01926">
    <property type="entry name" value="MMR_HSR1"/>
    <property type="match status" value="1"/>
</dbReference>
<dbReference type="PRINTS" id="PR00326">
    <property type="entry name" value="GTP1OBG"/>
</dbReference>
<dbReference type="SUPFAM" id="SSF102741">
    <property type="entry name" value="Obg GTP-binding protein C-terminal domain"/>
    <property type="match status" value="1"/>
</dbReference>
<dbReference type="SUPFAM" id="SSF82051">
    <property type="entry name" value="Obg GTP-binding protein N-terminal domain"/>
    <property type="match status" value="1"/>
</dbReference>
<dbReference type="SUPFAM" id="SSF52540">
    <property type="entry name" value="P-loop containing nucleoside triphosphate hydrolases"/>
    <property type="match status" value="1"/>
</dbReference>
<dbReference type="PROSITE" id="PS51710">
    <property type="entry name" value="G_OBG"/>
    <property type="match status" value="1"/>
</dbReference>
<dbReference type="PROSITE" id="PS00905">
    <property type="entry name" value="GTP1_OBG"/>
    <property type="match status" value="1"/>
</dbReference>
<dbReference type="PROSITE" id="PS51883">
    <property type="entry name" value="OBG"/>
    <property type="match status" value="1"/>
</dbReference>
<dbReference type="PROSITE" id="PS51881">
    <property type="entry name" value="OCT"/>
    <property type="match status" value="1"/>
</dbReference>
<proteinExistence type="inferred from homology"/>
<gene>
    <name evidence="1" type="primary">obg</name>
    <name type="ordered locus">MAB_1612</name>
</gene>
<keyword id="KW-0963">Cytoplasm</keyword>
<keyword id="KW-0342">GTP-binding</keyword>
<keyword id="KW-0378">Hydrolase</keyword>
<keyword id="KW-0460">Magnesium</keyword>
<keyword id="KW-0479">Metal-binding</keyword>
<keyword id="KW-0547">Nucleotide-binding</keyword>
<keyword id="KW-1185">Reference proteome</keyword>
<protein>
    <recommendedName>
        <fullName evidence="1">GTPase Obg</fullName>
        <ecNumber evidence="1">3.6.5.-</ecNumber>
    </recommendedName>
    <alternativeName>
        <fullName evidence="1">GTP-binding protein Obg</fullName>
    </alternativeName>
</protein>
<accession>B1MMY5</accession>
<sequence>MPRFVDRVVIHAKAGTGGHGCASVHREKFKPLGGPDGGNGGRGGSVILEVDPQVHTLLDFHFHPHLQAPNGTQGMGGHRNGANGDDLILKVPDGTVVLDDDGRILADLVGAGARFDAAAGGRGGLGNAALASRARKAPGFALLGEAGAEVDLTLELKTVADVGLVGFPSAGKSSLVSVLSAAKPKIADYPFTTLVPNLGVVTTGENSFVMADVPGLIPGAAEGRGLGLEFLRHIERCAVLVHVVDCATLEPGRDPVSDIDALENELARYQPTLQDDSVLGDLADRPRAVVLNKVDVPEADELADFVTEEVSQRGWPVFKVSTLTRDGLRPLTFALWEMIVAARAARPEPVKTRPVIRPIPVDESGFTVSADPQNPGGFVVRGVRPERWIRQTNFENDEAVGYLGDRLARLGVEDELLKLGAEPGCAVTIGDMTFDWEPQTPAGVDVTMSGRGTDARIDKTDRVGAAERRQARRVRRGQVEPE</sequence>
<name>OBG_MYCA9</name>